<proteinExistence type="evidence at protein level"/>
<reference key="1">
    <citation type="journal article" date="2001" name="J. Biol. Chem.">
        <title>Characterization of a novel mammalian SUMO-1/Smt3-specific isopeptidase, a homologue of rat Axam, which is an Axin-binding protein promoting beta-Catenin degradation.</title>
        <authorList>
            <person name="Nishida T."/>
            <person name="Kaneko F."/>
            <person name="Kitagawa M."/>
            <person name="Yasuda H."/>
        </authorList>
    </citation>
    <scope>NUCLEOTIDE SEQUENCE [MRNA] (ISOFORM 2)</scope>
    <scope>FUNCTION</scope>
    <scope>MUTAGENESIS OF CYS-547</scope>
    <scope>ACTIVE SITE</scope>
    <scope>SUBCELLULAR LOCATION</scope>
    <source>
        <tissue>Osteoblast</tissue>
    </source>
</reference>
<reference key="2">
    <citation type="journal article" date="2002" name="Mol. Cell">
        <title>SUMO-1 protease-1 regulates gene transcription through PML.</title>
        <authorList>
            <person name="Best J.L."/>
            <person name="Ganiatsas S."/>
            <person name="Agarwal S."/>
            <person name="Changou A."/>
            <person name="Salomoni P."/>
            <person name="Shirihai O."/>
            <person name="Meluh P.B."/>
            <person name="Pandolfi P.P."/>
            <person name="Zon L.I."/>
        </authorList>
    </citation>
    <scope>NUCLEOTIDE SEQUENCE [MRNA] (ISOFORM 3)</scope>
    <scope>MUTAGENESIS OF CYS-547</scope>
    <scope>ACTIVE SITE</scope>
    <scope>SUBCELLULAR LOCATION</scope>
    <scope>TISSUE SPECIFICITY</scope>
    <scope>FUNCTION (ISOFORM 3)</scope>
</reference>
<reference key="3">
    <citation type="journal article" date="2005" name="Science">
        <title>The transcriptional landscape of the mammalian genome.</title>
        <authorList>
            <person name="Carninci P."/>
            <person name="Kasukawa T."/>
            <person name="Katayama S."/>
            <person name="Gough J."/>
            <person name="Frith M.C."/>
            <person name="Maeda N."/>
            <person name="Oyama R."/>
            <person name="Ravasi T."/>
            <person name="Lenhard B."/>
            <person name="Wells C."/>
            <person name="Kodzius R."/>
            <person name="Shimokawa K."/>
            <person name="Bajic V.B."/>
            <person name="Brenner S.E."/>
            <person name="Batalov S."/>
            <person name="Forrest A.R."/>
            <person name="Zavolan M."/>
            <person name="Davis M.J."/>
            <person name="Wilming L.G."/>
            <person name="Aidinis V."/>
            <person name="Allen J.E."/>
            <person name="Ambesi-Impiombato A."/>
            <person name="Apweiler R."/>
            <person name="Aturaliya R.N."/>
            <person name="Bailey T.L."/>
            <person name="Bansal M."/>
            <person name="Baxter L."/>
            <person name="Beisel K.W."/>
            <person name="Bersano T."/>
            <person name="Bono H."/>
            <person name="Chalk A.M."/>
            <person name="Chiu K.P."/>
            <person name="Choudhary V."/>
            <person name="Christoffels A."/>
            <person name="Clutterbuck D.R."/>
            <person name="Crowe M.L."/>
            <person name="Dalla E."/>
            <person name="Dalrymple B.P."/>
            <person name="de Bono B."/>
            <person name="Della Gatta G."/>
            <person name="di Bernardo D."/>
            <person name="Down T."/>
            <person name="Engstrom P."/>
            <person name="Fagiolini M."/>
            <person name="Faulkner G."/>
            <person name="Fletcher C.F."/>
            <person name="Fukushima T."/>
            <person name="Furuno M."/>
            <person name="Futaki S."/>
            <person name="Gariboldi M."/>
            <person name="Georgii-Hemming P."/>
            <person name="Gingeras T.R."/>
            <person name="Gojobori T."/>
            <person name="Green R.E."/>
            <person name="Gustincich S."/>
            <person name="Harbers M."/>
            <person name="Hayashi Y."/>
            <person name="Hensch T.K."/>
            <person name="Hirokawa N."/>
            <person name="Hill D."/>
            <person name="Huminiecki L."/>
            <person name="Iacono M."/>
            <person name="Ikeo K."/>
            <person name="Iwama A."/>
            <person name="Ishikawa T."/>
            <person name="Jakt M."/>
            <person name="Kanapin A."/>
            <person name="Katoh M."/>
            <person name="Kawasawa Y."/>
            <person name="Kelso J."/>
            <person name="Kitamura H."/>
            <person name="Kitano H."/>
            <person name="Kollias G."/>
            <person name="Krishnan S.P."/>
            <person name="Kruger A."/>
            <person name="Kummerfeld S.K."/>
            <person name="Kurochkin I.V."/>
            <person name="Lareau L.F."/>
            <person name="Lazarevic D."/>
            <person name="Lipovich L."/>
            <person name="Liu J."/>
            <person name="Liuni S."/>
            <person name="McWilliam S."/>
            <person name="Madan Babu M."/>
            <person name="Madera M."/>
            <person name="Marchionni L."/>
            <person name="Matsuda H."/>
            <person name="Matsuzawa S."/>
            <person name="Miki H."/>
            <person name="Mignone F."/>
            <person name="Miyake S."/>
            <person name="Morris K."/>
            <person name="Mottagui-Tabar S."/>
            <person name="Mulder N."/>
            <person name="Nakano N."/>
            <person name="Nakauchi H."/>
            <person name="Ng P."/>
            <person name="Nilsson R."/>
            <person name="Nishiguchi S."/>
            <person name="Nishikawa S."/>
            <person name="Nori F."/>
            <person name="Ohara O."/>
            <person name="Okazaki Y."/>
            <person name="Orlando V."/>
            <person name="Pang K.C."/>
            <person name="Pavan W.J."/>
            <person name="Pavesi G."/>
            <person name="Pesole G."/>
            <person name="Petrovsky N."/>
            <person name="Piazza S."/>
            <person name="Reed J."/>
            <person name="Reid J.F."/>
            <person name="Ring B.Z."/>
            <person name="Ringwald M."/>
            <person name="Rost B."/>
            <person name="Ruan Y."/>
            <person name="Salzberg S.L."/>
            <person name="Sandelin A."/>
            <person name="Schneider C."/>
            <person name="Schoenbach C."/>
            <person name="Sekiguchi K."/>
            <person name="Semple C.A."/>
            <person name="Seno S."/>
            <person name="Sessa L."/>
            <person name="Sheng Y."/>
            <person name="Shibata Y."/>
            <person name="Shimada H."/>
            <person name="Shimada K."/>
            <person name="Silva D."/>
            <person name="Sinclair B."/>
            <person name="Sperling S."/>
            <person name="Stupka E."/>
            <person name="Sugiura K."/>
            <person name="Sultana R."/>
            <person name="Takenaka Y."/>
            <person name="Taki K."/>
            <person name="Tammoja K."/>
            <person name="Tan S.L."/>
            <person name="Tang S."/>
            <person name="Taylor M.S."/>
            <person name="Tegner J."/>
            <person name="Teichmann S.A."/>
            <person name="Ueda H.R."/>
            <person name="van Nimwegen E."/>
            <person name="Verardo R."/>
            <person name="Wei C.L."/>
            <person name="Yagi K."/>
            <person name="Yamanishi H."/>
            <person name="Zabarovsky E."/>
            <person name="Zhu S."/>
            <person name="Zimmer A."/>
            <person name="Hide W."/>
            <person name="Bult C."/>
            <person name="Grimmond S.M."/>
            <person name="Teasdale R.D."/>
            <person name="Liu E.T."/>
            <person name="Brusic V."/>
            <person name="Quackenbush J."/>
            <person name="Wahlestedt C."/>
            <person name="Mattick J.S."/>
            <person name="Hume D.A."/>
            <person name="Kai C."/>
            <person name="Sasaki D."/>
            <person name="Tomaru Y."/>
            <person name="Fukuda S."/>
            <person name="Kanamori-Katayama M."/>
            <person name="Suzuki M."/>
            <person name="Aoki J."/>
            <person name="Arakawa T."/>
            <person name="Iida J."/>
            <person name="Imamura K."/>
            <person name="Itoh M."/>
            <person name="Kato T."/>
            <person name="Kawaji H."/>
            <person name="Kawagashira N."/>
            <person name="Kawashima T."/>
            <person name="Kojima M."/>
            <person name="Kondo S."/>
            <person name="Konno H."/>
            <person name="Nakano K."/>
            <person name="Ninomiya N."/>
            <person name="Nishio T."/>
            <person name="Okada M."/>
            <person name="Plessy C."/>
            <person name="Shibata K."/>
            <person name="Shiraki T."/>
            <person name="Suzuki S."/>
            <person name="Tagami M."/>
            <person name="Waki K."/>
            <person name="Watahiki A."/>
            <person name="Okamura-Oho Y."/>
            <person name="Suzuki H."/>
            <person name="Kawai J."/>
            <person name="Hayashizaki Y."/>
        </authorList>
    </citation>
    <scope>NUCLEOTIDE SEQUENCE [LARGE SCALE MRNA] (ISOFORM 1)</scope>
    <source>
        <strain>C57BL/6J</strain>
        <tissue>Testis</tissue>
        <tissue>Thymus</tissue>
    </source>
</reference>
<reference key="4">
    <citation type="journal article" date="2004" name="Genome Res.">
        <title>The status, quality, and expansion of the NIH full-length cDNA project: the Mammalian Gene Collection (MGC).</title>
        <authorList>
            <consortium name="The MGC Project Team"/>
        </authorList>
    </citation>
    <scope>NUCLEOTIDE SEQUENCE [LARGE SCALE MRNA] (ISOFORM 1)</scope>
    <source>
        <tissue>Mammary tumor</tissue>
    </source>
</reference>
<reference key="5">
    <citation type="submission" date="2009-01" db="UniProtKB">
        <authorList>
            <person name="Lubec G."/>
            <person name="Sunyer B."/>
            <person name="Chen W.-Q."/>
        </authorList>
    </citation>
    <scope>PROTEIN SEQUENCE OF 342-348 AND 489-499</scope>
    <scope>IDENTIFICATION BY MASS SPECTROMETRY</scope>
    <source>
        <strain>OF1</strain>
        <tissue>Hippocampus</tissue>
    </source>
</reference>
<reference key="6">
    <citation type="journal article" date="2010" name="Cell">
        <title>A tissue-specific atlas of mouse protein phosphorylation and expression.</title>
        <authorList>
            <person name="Huttlin E.L."/>
            <person name="Jedrychowski M.P."/>
            <person name="Elias J.E."/>
            <person name="Goswami T."/>
            <person name="Rad R."/>
            <person name="Beausoleil S.A."/>
            <person name="Villen J."/>
            <person name="Haas W."/>
            <person name="Sowa M.E."/>
            <person name="Gygi S.P."/>
        </authorList>
    </citation>
    <scope>IDENTIFICATION BY MASS SPECTROMETRY [LARGE SCALE ANALYSIS]</scope>
    <source>
        <tissue>Brain</tissue>
    </source>
</reference>
<reference key="7">
    <citation type="journal article" date="2010" name="Mol. Cell. Biol.">
        <title>Control of adipogenesis by the SUMO-specific protease SENP2.</title>
        <authorList>
            <person name="Chung S.S."/>
            <person name="Ahn B.Y."/>
            <person name="Kim M."/>
            <person name="Choi H.H."/>
            <person name="Park H.S."/>
            <person name="Kang S."/>
            <person name="Park S.G."/>
            <person name="Kim Y.B."/>
            <person name="Cho Y.M."/>
            <person name="Lee H.K."/>
            <person name="Chung C.H."/>
            <person name="Park K.S."/>
        </authorList>
    </citation>
    <scope>FUNCTION</scope>
    <scope>DEVELOPMENTAL STAGE</scope>
</reference>
<reference key="8">
    <citation type="journal article" date="2016" name="Immunity">
        <title>Sumoylation promotes the stability of the DNA sensor cGAS and the adaptor STING to regulate the kinetics of response to DNA virus.</title>
        <authorList>
            <person name="Hu M.M."/>
            <person name="Yang Q."/>
            <person name="Xie X.Q."/>
            <person name="Liao C.Y."/>
            <person name="Lin H."/>
            <person name="Liu T.T."/>
            <person name="Yin L."/>
            <person name="Shu H.B."/>
        </authorList>
    </citation>
    <scope>FUNCTION</scope>
</reference>
<gene>
    <name type="primary">Senp2</name>
    <name evidence="8" type="synonym">Smt3ip2</name>
    <name type="synonym">Supr1</name>
</gene>
<sequence length="588" mass="67579">MYRWLAKVLGTILRLCERPAPGARALLKRRRSSSTLFSTAVDTDEIPAKRPRLDCFIHQVKNSLYNAASLFGFPFQLTTKPMVSSACNGTRNVAPSGEVFSNSSSCELMSSGSCSSMLKLGNKSPNGISDYPKIRVTVTRDQPRRVLPSFGFTLKSEGYNRRPSGRRHSKSNPESSLTWKPQEQGVTEMISEEGGKGVRRPHCTVEEGVQKDEREKYRKLLERLKEGAHGSTFPPTVSHHSSQRIQMDTLKTKGWVEEQNHGVRTTHFVPKQYRVVETRGPLCSMRSEKRYSKGKADTEKVVGLRFEKEGTRGHQMEPDLSEEVSARLRLGSGSNGLLRRKISVLEIKEKNFPSKEKDRRTEDLFEFTEDMEKEISNALGHGPPDEILSSAFKLRITRGDIQTLKNYHWLNDEVINFYMNLLVERSKKQGYPALHAFSTFFYPKLKSGGYQAVKRWTKGVNLFEQELVLVPIHRKVHWSLVVMDLRKKCLKYLDSMGQKGHRICEILLQYLQDESKTKRNTDLNLLEWTHYSMKPHEIPQQLNGSDCGMFTCKYADYISRDKPITFTQHQMPLFRKKMVWEILHQQLL</sequence>
<organism>
    <name type="scientific">Mus musculus</name>
    <name type="common">Mouse</name>
    <dbReference type="NCBI Taxonomy" id="10090"/>
    <lineage>
        <taxon>Eukaryota</taxon>
        <taxon>Metazoa</taxon>
        <taxon>Chordata</taxon>
        <taxon>Craniata</taxon>
        <taxon>Vertebrata</taxon>
        <taxon>Euteleostomi</taxon>
        <taxon>Mammalia</taxon>
        <taxon>Eutheria</taxon>
        <taxon>Euarchontoglires</taxon>
        <taxon>Glires</taxon>
        <taxon>Rodentia</taxon>
        <taxon>Myomorpha</taxon>
        <taxon>Muroidea</taxon>
        <taxon>Muridae</taxon>
        <taxon>Murinae</taxon>
        <taxon>Mus</taxon>
        <taxon>Mus</taxon>
    </lineage>
</organism>
<feature type="chain" id="PRO_0000101719" description="Sentrin-specific protease 2">
    <location>
        <begin position="1"/>
        <end position="588"/>
    </location>
</feature>
<feature type="region of interest" description="Disordered" evidence="3">
    <location>
        <begin position="157"/>
        <end position="184"/>
    </location>
</feature>
<feature type="region of interest" description="Protease" evidence="1">
    <location>
        <begin position="394"/>
        <end position="558"/>
    </location>
</feature>
<feature type="short sequence motif" description="Nuclear localization signal" evidence="2">
    <location>
        <begin position="28"/>
        <end position="31"/>
    </location>
</feature>
<feature type="short sequence motif" description="Nuclear localization signal" evidence="2">
    <location>
        <begin position="47"/>
        <end position="52"/>
    </location>
</feature>
<feature type="short sequence motif" description="Nuclear export signal" evidence="1">
    <location>
        <begin position="316"/>
        <end position="331"/>
    </location>
</feature>
<feature type="compositionally biased region" description="Polar residues" evidence="3">
    <location>
        <begin position="172"/>
        <end position="184"/>
    </location>
</feature>
<feature type="active site" evidence="1">
    <location>
        <position position="477"/>
    </location>
</feature>
<feature type="active site" evidence="1">
    <location>
        <position position="494"/>
    </location>
</feature>
<feature type="active site" description="Nucleophile" evidence="11 12">
    <location>
        <position position="547"/>
    </location>
</feature>
<feature type="modified residue" description="Phosphoserine" evidence="1">
    <location>
        <position position="32"/>
    </location>
</feature>
<feature type="modified residue" description="Phosphoserine" evidence="1">
    <location>
        <position position="332"/>
    </location>
</feature>
<feature type="modified residue" description="Phosphoserine" evidence="1">
    <location>
        <position position="343"/>
    </location>
</feature>
<feature type="splice variant" id="VSP_021942" description="In isoform 3." evidence="9">
    <location>
        <begin position="1"/>
        <end position="81"/>
    </location>
</feature>
<feature type="splice variant" id="VSP_005273" description="In isoform 2." evidence="8">
    <original>MYRWLAKVLGTILRLCERPAPGARALLKRRRSSSTLFSTAVDTDEIPAKRPRL</original>
    <variation>MEQNSK</variation>
    <location>
        <begin position="1"/>
        <end position="53"/>
    </location>
</feature>
<feature type="mutagenesis site" description="Abolishes protease activity." evidence="4 5">
    <original>C</original>
    <variation>A</variation>
    <location>
        <position position="547"/>
    </location>
</feature>
<feature type="sequence conflict" description="In Ref. 1; AAL14437." evidence="10" ref="1">
    <original>L</original>
    <variation>F</variation>
    <location>
        <position position="220"/>
    </location>
</feature>
<feature type="sequence conflict" description="In Ref. 1; AAL14437." evidence="10" ref="1">
    <original>W</original>
    <variation>C</variation>
    <location>
        <position position="255"/>
    </location>
</feature>
<name>SENP2_MOUSE</name>
<comment type="function">
    <text evidence="1 4 6 7">Protease that catalyzes two essential functions in the SUMO pathway (PubMed:11489887, PubMed:20194620). The first is the hydrolysis of an alpha-linked peptide bond at the C-terminal end of the small ubiquitin-like modifier (SUMO) propeptides, SUMO1, SUMO2 and SUMO3 leading to the mature form of the proteins (By similarity). The second is the deconjugation of SUMO1, SUMO2 and SUMO3 from targeted proteins, by cleaving an epsilon-linked peptide bond between the C-terminal glycine of the mature SUMO and the lysine epsilon-amino group of the target protein (PubMed:11489887, PubMed:20194620, PubMed:27637147). May down-regulate CTNNB1 levels and thereby modulate the Wnt pathway (PubMed:11489887). Deconjugates SUMO2 from MTA1 (By similarity). Plays a dynamic role in adipogenesis by desumoylating and promoting the stabilization of CEBPB (PubMed:20194620). Acts as a regulator of the cGAS-STING pathway by catalyzing desumoylation of CGAS and STING1 during the late phase of viral infection (PubMed:27637147).</text>
</comment>
<comment type="function">
    <molecule>Isoform 3</molecule>
    <text evidence="5">Activates transcription.</text>
</comment>
<comment type="subunit">
    <text evidence="1">Binds to SUMO2 and SUMO3 (By similarity). Interacts with the C-terminal domain of NUP153 via its N-terminus (By similarity). Interacts with MTA1 (By similarity).</text>
</comment>
<comment type="subcellular location">
    <molecule>Isoform 1</molecule>
    <subcellularLocation>
        <location evidence="1">Nucleus</location>
        <location evidence="1">Nuclear pore complex</location>
    </subcellularLocation>
    <subcellularLocation>
        <location evidence="1">Nucleus membrane</location>
        <topology evidence="1">Peripheral membrane protein</topology>
        <orientation evidence="1">Nucleoplasmic side</orientation>
    </subcellularLocation>
    <text evidence="1">Shuttles between cytoplasm and nucleus.</text>
</comment>
<comment type="subcellular location">
    <molecule>Isoform 2</molecule>
    <subcellularLocation>
        <location evidence="4">Cytoplasm</location>
    </subcellularLocation>
    <subcellularLocation>
        <location evidence="4">Cytoplasmic vesicle</location>
    </subcellularLocation>
    <text evidence="4">Found in the cytoplasm and in cytoplasmic vesicles, together with axin.</text>
</comment>
<comment type="subcellular location">
    <molecule>Isoform 3</molecule>
    <subcellularLocation>
        <location evidence="5">Nucleus</location>
        <location evidence="5">PML body</location>
    </subcellularLocation>
</comment>
<comment type="alternative products">
    <event type="alternative splicing"/>
    <isoform>
        <id>Q91ZX6-1</id>
        <name>1</name>
        <sequence type="displayed"/>
    </isoform>
    <isoform>
        <id>Q91ZX6-2</id>
        <name>2</name>
        <sequence type="described" ref="VSP_005273"/>
    </isoform>
    <isoform>
        <id>Q91ZX6-3</id>
        <name>3</name>
        <sequence type="described" ref="VSP_021942"/>
    </isoform>
</comment>
<comment type="tissue specificity">
    <text evidence="5">Highly expressed in testis. Detected in brain, heart and thymus.</text>
</comment>
<comment type="developmental stage">
    <text evidence="6">In 3T3-L1 cells, expression is transiently induced during early adipocyte differentiation (PubMed:20194620).</text>
</comment>
<comment type="domain">
    <text evidence="1">The N-terminus is necessary and sufficient for nuclear envelope targeting.</text>
</comment>
<comment type="PTM">
    <text evidence="1">Polyubiquitinated; which leads to proteasomal degradation.</text>
</comment>
<comment type="similarity">
    <text evidence="10">Belongs to the peptidase C48 family.</text>
</comment>
<accession>Q91ZX6</accession>
<accession>Q544T8</accession>
<accession>Q811R3</accession>
<accession>Q9D4Z0</accession>
<dbReference type="EC" id="3.4.22.-" evidence="4 6 7"/>
<dbReference type="EMBL" id="AF368904">
    <property type="protein sequence ID" value="AAL14437.1"/>
    <property type="molecule type" value="mRNA"/>
</dbReference>
<dbReference type="EMBL" id="AY188288">
    <property type="protein sequence ID" value="AAO27902.1"/>
    <property type="molecule type" value="mRNA"/>
</dbReference>
<dbReference type="EMBL" id="AK015987">
    <property type="protein sequence ID" value="BAB30067.1"/>
    <property type="molecule type" value="mRNA"/>
</dbReference>
<dbReference type="EMBL" id="AK031030">
    <property type="protein sequence ID" value="BAC27222.1"/>
    <property type="molecule type" value="mRNA"/>
</dbReference>
<dbReference type="EMBL" id="BC031652">
    <property type="protein sequence ID" value="AAH31652.1"/>
    <property type="molecule type" value="mRNA"/>
</dbReference>
<dbReference type="CCDS" id="CCDS28065.1">
    <molecule id="Q91ZX6-1"/>
</dbReference>
<dbReference type="RefSeq" id="NP_001344353.1">
    <molecule id="Q91ZX6-3"/>
    <property type="nucleotide sequence ID" value="NM_001357424.1"/>
</dbReference>
<dbReference type="RefSeq" id="NP_083733.1">
    <molecule id="Q91ZX6-1"/>
    <property type="nucleotide sequence ID" value="NM_029457.3"/>
</dbReference>
<dbReference type="RefSeq" id="XP_006522753.1">
    <property type="nucleotide sequence ID" value="XM_006522690.1"/>
</dbReference>
<dbReference type="SMR" id="Q91ZX6"/>
<dbReference type="BioGRID" id="217772">
    <property type="interactions" value="7"/>
</dbReference>
<dbReference type="FunCoup" id="Q91ZX6">
    <property type="interactions" value="3700"/>
</dbReference>
<dbReference type="STRING" id="10090.ENSMUSP00000023561"/>
<dbReference type="MEROPS" id="C48.007"/>
<dbReference type="iPTMnet" id="Q91ZX6"/>
<dbReference type="PhosphoSitePlus" id="Q91ZX6"/>
<dbReference type="PaxDb" id="10090-ENSMUSP00000023561"/>
<dbReference type="PeptideAtlas" id="Q91ZX6"/>
<dbReference type="ProteomicsDB" id="256542">
    <molecule id="Q91ZX6-1"/>
</dbReference>
<dbReference type="ProteomicsDB" id="256543">
    <molecule id="Q91ZX6-2"/>
</dbReference>
<dbReference type="ProteomicsDB" id="256544">
    <molecule id="Q91ZX6-3"/>
</dbReference>
<dbReference type="Antibodypedia" id="33840">
    <property type="antibodies" value="778 antibodies from 35 providers"/>
</dbReference>
<dbReference type="DNASU" id="75826"/>
<dbReference type="Ensembl" id="ENSMUST00000023561.8">
    <molecule id="Q91ZX6-1"/>
    <property type="protein sequence ID" value="ENSMUSP00000023561.8"/>
    <property type="gene ID" value="ENSMUSG00000022855.10"/>
</dbReference>
<dbReference type="GeneID" id="75826"/>
<dbReference type="KEGG" id="mmu:75826"/>
<dbReference type="UCSC" id="uc007yrw.2">
    <molecule id="Q91ZX6-1"/>
    <property type="organism name" value="mouse"/>
</dbReference>
<dbReference type="UCSC" id="uc007yrx.2">
    <molecule id="Q91ZX6-2"/>
    <property type="organism name" value="mouse"/>
</dbReference>
<dbReference type="UCSC" id="uc007yry.2">
    <molecule id="Q91ZX6-3"/>
    <property type="organism name" value="mouse"/>
</dbReference>
<dbReference type="AGR" id="MGI:1923076"/>
<dbReference type="CTD" id="59343"/>
<dbReference type="MGI" id="MGI:1923076">
    <property type="gene designation" value="Senp2"/>
</dbReference>
<dbReference type="VEuPathDB" id="HostDB:ENSMUSG00000022855"/>
<dbReference type="eggNOG" id="KOG0778">
    <property type="taxonomic scope" value="Eukaryota"/>
</dbReference>
<dbReference type="GeneTree" id="ENSGT00940000154951"/>
<dbReference type="HOGENOM" id="CLU_024324_4_0_1"/>
<dbReference type="InParanoid" id="Q91ZX6"/>
<dbReference type="OMA" id="CHWLNDE"/>
<dbReference type="OrthoDB" id="1939479at2759"/>
<dbReference type="PhylomeDB" id="Q91ZX6"/>
<dbReference type="TreeFam" id="TF316289"/>
<dbReference type="BRENDA" id="3.4.22.B71">
    <property type="organism ID" value="3474"/>
</dbReference>
<dbReference type="Reactome" id="R-MMU-3065679">
    <property type="pathway name" value="SUMO is proteolytically processed"/>
</dbReference>
<dbReference type="BioGRID-ORCS" id="75826">
    <property type="hits" value="3 hits in 78 CRISPR screens"/>
</dbReference>
<dbReference type="ChiTaRS" id="Senp2">
    <property type="organism name" value="mouse"/>
</dbReference>
<dbReference type="PRO" id="PR:Q91ZX6"/>
<dbReference type="Proteomes" id="UP000000589">
    <property type="component" value="Chromosome 16"/>
</dbReference>
<dbReference type="RNAct" id="Q91ZX6">
    <property type="molecule type" value="protein"/>
</dbReference>
<dbReference type="Bgee" id="ENSMUSG00000022855">
    <property type="expression patterns" value="Expressed in spermatocyte and 252 other cell types or tissues"/>
</dbReference>
<dbReference type="ExpressionAtlas" id="Q91ZX6">
    <property type="expression patterns" value="baseline and differential"/>
</dbReference>
<dbReference type="GO" id="GO:0005737">
    <property type="term" value="C:cytoplasm"/>
    <property type="evidence" value="ECO:0000314"/>
    <property type="project" value="MGI"/>
</dbReference>
<dbReference type="GO" id="GO:0031410">
    <property type="term" value="C:cytoplasmic vesicle"/>
    <property type="evidence" value="ECO:0000314"/>
    <property type="project" value="MGI"/>
</dbReference>
<dbReference type="GO" id="GO:0005829">
    <property type="term" value="C:cytosol"/>
    <property type="evidence" value="ECO:0007669"/>
    <property type="project" value="Ensembl"/>
</dbReference>
<dbReference type="GO" id="GO:0016604">
    <property type="term" value="C:nuclear body"/>
    <property type="evidence" value="ECO:0000314"/>
    <property type="project" value="MGI"/>
</dbReference>
<dbReference type="GO" id="GO:0031965">
    <property type="term" value="C:nuclear membrane"/>
    <property type="evidence" value="ECO:0007669"/>
    <property type="project" value="UniProtKB-SubCell"/>
</dbReference>
<dbReference type="GO" id="GO:0005643">
    <property type="term" value="C:nuclear pore"/>
    <property type="evidence" value="ECO:0000250"/>
    <property type="project" value="UniProtKB"/>
</dbReference>
<dbReference type="GO" id="GO:0005634">
    <property type="term" value="C:nucleus"/>
    <property type="evidence" value="ECO:0000314"/>
    <property type="project" value="MGI"/>
</dbReference>
<dbReference type="GO" id="GO:0016605">
    <property type="term" value="C:PML body"/>
    <property type="evidence" value="ECO:0007669"/>
    <property type="project" value="UniProtKB-SubCell"/>
</dbReference>
<dbReference type="GO" id="GO:0016929">
    <property type="term" value="F:deSUMOylase activity"/>
    <property type="evidence" value="ECO:0000314"/>
    <property type="project" value="MGI"/>
</dbReference>
<dbReference type="GO" id="GO:0070139">
    <property type="term" value="F:SUMO-specific endopeptidase activity"/>
    <property type="evidence" value="ECO:0000250"/>
    <property type="project" value="UniProtKB"/>
</dbReference>
<dbReference type="GO" id="GO:0045444">
    <property type="term" value="P:fat cell differentiation"/>
    <property type="evidence" value="ECO:0000314"/>
    <property type="project" value="UniProtKB"/>
</dbReference>
<dbReference type="GO" id="GO:0007507">
    <property type="term" value="P:heart development"/>
    <property type="evidence" value="ECO:0000315"/>
    <property type="project" value="MGI"/>
</dbReference>
<dbReference type="GO" id="GO:0060711">
    <property type="term" value="P:labyrinthine layer development"/>
    <property type="evidence" value="ECO:0000315"/>
    <property type="project" value="MGI"/>
</dbReference>
<dbReference type="GO" id="GO:0051028">
    <property type="term" value="P:mRNA transport"/>
    <property type="evidence" value="ECO:0007669"/>
    <property type="project" value="UniProtKB-KW"/>
</dbReference>
<dbReference type="GO" id="GO:0043518">
    <property type="term" value="P:negative regulation of DNA damage response, signal transduction by p53 class mediator"/>
    <property type="evidence" value="ECO:0000314"/>
    <property type="project" value="MGI"/>
</dbReference>
<dbReference type="GO" id="GO:0031397">
    <property type="term" value="P:negative regulation of protein ubiquitination"/>
    <property type="evidence" value="ECO:0007669"/>
    <property type="project" value="Ensembl"/>
</dbReference>
<dbReference type="GO" id="GO:1901797">
    <property type="term" value="P:negative regulation of signal transduction by p53 class mediator"/>
    <property type="evidence" value="ECO:0000314"/>
    <property type="project" value="MGI"/>
</dbReference>
<dbReference type="GO" id="GO:0031398">
    <property type="term" value="P:positive regulation of protein ubiquitination"/>
    <property type="evidence" value="ECO:0007669"/>
    <property type="project" value="Ensembl"/>
</dbReference>
<dbReference type="GO" id="GO:0045944">
    <property type="term" value="P:positive regulation of transcription by RNA polymerase II"/>
    <property type="evidence" value="ECO:0000315"/>
    <property type="project" value="MGI"/>
</dbReference>
<dbReference type="GO" id="GO:0031648">
    <property type="term" value="P:protein destabilization"/>
    <property type="evidence" value="ECO:0007669"/>
    <property type="project" value="Ensembl"/>
</dbReference>
<dbReference type="GO" id="GO:0016926">
    <property type="term" value="P:protein desumoylation"/>
    <property type="evidence" value="ECO:0000314"/>
    <property type="project" value="MGI"/>
</dbReference>
<dbReference type="GO" id="GO:0015031">
    <property type="term" value="P:protein transport"/>
    <property type="evidence" value="ECO:0007669"/>
    <property type="project" value="UniProtKB-KW"/>
</dbReference>
<dbReference type="GO" id="GO:0006508">
    <property type="term" value="P:proteolysis"/>
    <property type="evidence" value="ECO:0007669"/>
    <property type="project" value="UniProtKB-KW"/>
</dbReference>
<dbReference type="GO" id="GO:0032875">
    <property type="term" value="P:regulation of DNA endoreduplication"/>
    <property type="evidence" value="ECO:0000315"/>
    <property type="project" value="MGI"/>
</dbReference>
<dbReference type="GO" id="GO:2000045">
    <property type="term" value="P:regulation of G1/S transition of mitotic cell cycle"/>
    <property type="evidence" value="ECO:0000315"/>
    <property type="project" value="MGI"/>
</dbReference>
<dbReference type="GO" id="GO:0060712">
    <property type="term" value="P:spongiotrophoblast layer development"/>
    <property type="evidence" value="ECO:0000315"/>
    <property type="project" value="MGI"/>
</dbReference>
<dbReference type="GO" id="GO:0060707">
    <property type="term" value="P:trophoblast giant cell differentiation"/>
    <property type="evidence" value="ECO:0000315"/>
    <property type="project" value="MGI"/>
</dbReference>
<dbReference type="GO" id="GO:0016055">
    <property type="term" value="P:Wnt signaling pathway"/>
    <property type="evidence" value="ECO:0007669"/>
    <property type="project" value="UniProtKB-KW"/>
</dbReference>
<dbReference type="FunFam" id="3.40.395.10:FF:000001">
    <property type="entry name" value="Sentrin-specific protease 1"/>
    <property type="match status" value="1"/>
</dbReference>
<dbReference type="Gene3D" id="3.40.395.10">
    <property type="entry name" value="Adenoviral Proteinase, Chain A"/>
    <property type="match status" value="1"/>
</dbReference>
<dbReference type="InterPro" id="IPR038765">
    <property type="entry name" value="Papain-like_cys_pep_sf"/>
</dbReference>
<dbReference type="InterPro" id="IPR003653">
    <property type="entry name" value="Peptidase_C48_C"/>
</dbReference>
<dbReference type="PANTHER" id="PTHR12606:SF11">
    <property type="entry name" value="SENTRIN-SPECIFIC PROTEASE 2"/>
    <property type="match status" value="1"/>
</dbReference>
<dbReference type="PANTHER" id="PTHR12606">
    <property type="entry name" value="SENTRIN/SUMO-SPECIFIC PROTEASE"/>
    <property type="match status" value="1"/>
</dbReference>
<dbReference type="Pfam" id="PF02902">
    <property type="entry name" value="Peptidase_C48"/>
    <property type="match status" value="1"/>
</dbReference>
<dbReference type="SUPFAM" id="SSF54001">
    <property type="entry name" value="Cysteine proteinases"/>
    <property type="match status" value="1"/>
</dbReference>
<dbReference type="PROSITE" id="PS50600">
    <property type="entry name" value="ULP_PROTEASE"/>
    <property type="match status" value="1"/>
</dbReference>
<evidence type="ECO:0000250" key="1">
    <source>
        <dbReference type="UniProtKB" id="Q9HC62"/>
    </source>
</evidence>
<evidence type="ECO:0000255" key="2"/>
<evidence type="ECO:0000256" key="3">
    <source>
        <dbReference type="SAM" id="MobiDB-lite"/>
    </source>
</evidence>
<evidence type="ECO:0000269" key="4">
    <source>
    </source>
</evidence>
<evidence type="ECO:0000269" key="5">
    <source>
    </source>
</evidence>
<evidence type="ECO:0000269" key="6">
    <source>
    </source>
</evidence>
<evidence type="ECO:0000269" key="7">
    <source>
    </source>
</evidence>
<evidence type="ECO:0000303" key="8">
    <source>
    </source>
</evidence>
<evidence type="ECO:0000303" key="9">
    <source>
    </source>
</evidence>
<evidence type="ECO:0000305" key="10"/>
<evidence type="ECO:0000305" key="11">
    <source>
    </source>
</evidence>
<evidence type="ECO:0000305" key="12">
    <source>
    </source>
</evidence>
<keyword id="KW-0010">Activator</keyword>
<keyword id="KW-0025">Alternative splicing</keyword>
<keyword id="KW-0963">Cytoplasm</keyword>
<keyword id="KW-0968">Cytoplasmic vesicle</keyword>
<keyword id="KW-0903">Direct protein sequencing</keyword>
<keyword id="KW-0378">Hydrolase</keyword>
<keyword id="KW-0472">Membrane</keyword>
<keyword id="KW-0509">mRNA transport</keyword>
<keyword id="KW-0906">Nuclear pore complex</keyword>
<keyword id="KW-0539">Nucleus</keyword>
<keyword id="KW-0597">Phosphoprotein</keyword>
<keyword id="KW-0645">Protease</keyword>
<keyword id="KW-0653">Protein transport</keyword>
<keyword id="KW-1185">Reference proteome</keyword>
<keyword id="KW-0788">Thiol protease</keyword>
<keyword id="KW-0804">Transcription</keyword>
<keyword id="KW-0805">Transcription regulation</keyword>
<keyword id="KW-0811">Translocation</keyword>
<keyword id="KW-0813">Transport</keyword>
<keyword id="KW-0832">Ubl conjugation</keyword>
<keyword id="KW-0833">Ubl conjugation pathway</keyword>
<keyword id="KW-0879">Wnt signaling pathway</keyword>
<protein>
    <recommendedName>
        <fullName evidence="10">Sentrin-specific protease 2</fullName>
        <ecNumber evidence="4 6 7">3.4.22.-</ecNumber>
    </recommendedName>
    <alternativeName>
        <fullName evidence="9">Axam2</fullName>
    </alternativeName>
    <alternativeName>
        <fullName>SUMO-1 protease 1</fullName>
        <shortName>SuPr-1</shortName>
    </alternativeName>
    <alternativeName>
        <fullName evidence="8">SUMO-1/Smt3-specific isopeptidase 2</fullName>
        <shortName evidence="8">Smt3ip2</shortName>
    </alternativeName>
    <alternativeName>
        <fullName>Sentrin/SUMO-specific protease SENP2</fullName>
    </alternativeName>
</protein>